<evidence type="ECO:0000255" key="1">
    <source>
        <dbReference type="HAMAP-Rule" id="MF_00015"/>
    </source>
</evidence>
<keyword id="KW-0068">Autocatalytic cleavage</keyword>
<keyword id="KW-0227">DNA damage</keyword>
<keyword id="KW-0234">DNA repair</keyword>
<keyword id="KW-0235">DNA replication</keyword>
<keyword id="KW-0238">DNA-binding</keyword>
<keyword id="KW-0378">Hydrolase</keyword>
<keyword id="KW-0678">Repressor</keyword>
<keyword id="KW-0742">SOS response</keyword>
<keyword id="KW-0804">Transcription</keyword>
<keyword id="KW-0805">Transcription regulation</keyword>
<name>LEXA_BRUMB</name>
<accession>C0RJB4</accession>
<comment type="function">
    <text evidence="1">Represses a number of genes involved in the response to DNA damage (SOS response), including recA and lexA. In the presence of single-stranded DNA, RecA interacts with LexA causing an autocatalytic cleavage which disrupts the DNA-binding part of LexA, leading to derepression of the SOS regulon and eventually DNA repair.</text>
</comment>
<comment type="catalytic activity">
    <reaction evidence="1">
        <text>Hydrolysis of Ala-|-Gly bond in repressor LexA.</text>
        <dbReference type="EC" id="3.4.21.88"/>
    </reaction>
</comment>
<comment type="subunit">
    <text evidence="1">Homodimer.</text>
</comment>
<comment type="similarity">
    <text evidence="1">Belongs to the peptidase S24 family.</text>
</comment>
<feature type="chain" id="PRO_1000116598" description="LexA repressor">
    <location>
        <begin position="1"/>
        <end position="240"/>
    </location>
</feature>
<feature type="DNA-binding region" description="H-T-H motif" evidence="1">
    <location>
        <begin position="26"/>
        <end position="46"/>
    </location>
</feature>
<feature type="active site" description="For autocatalytic cleavage activity" evidence="1">
    <location>
        <position position="161"/>
    </location>
</feature>
<feature type="active site" description="For autocatalytic cleavage activity" evidence="1">
    <location>
        <position position="199"/>
    </location>
</feature>
<feature type="site" description="Cleavage; by autolysis" evidence="1">
    <location>
        <begin position="126"/>
        <end position="127"/>
    </location>
</feature>
<proteinExistence type="inferred from homology"/>
<gene>
    <name evidence="1" type="primary">lexA</name>
    <name type="ordered locus">BMEA_A1188</name>
</gene>
<organism>
    <name type="scientific">Brucella melitensis biotype 2 (strain ATCC 23457)</name>
    <dbReference type="NCBI Taxonomy" id="546272"/>
    <lineage>
        <taxon>Bacteria</taxon>
        <taxon>Pseudomonadati</taxon>
        <taxon>Pseudomonadota</taxon>
        <taxon>Alphaproteobacteria</taxon>
        <taxon>Hyphomicrobiales</taxon>
        <taxon>Brucellaceae</taxon>
        <taxon>Brucella/Ochrobactrum group</taxon>
        <taxon>Brucella</taxon>
    </lineage>
</organism>
<dbReference type="EC" id="3.4.21.88" evidence="1"/>
<dbReference type="EMBL" id="CP001488">
    <property type="protein sequence ID" value="ACO00922.1"/>
    <property type="molecule type" value="Genomic_DNA"/>
</dbReference>
<dbReference type="RefSeq" id="WP_002964272.1">
    <property type="nucleotide sequence ID" value="NC_012441.1"/>
</dbReference>
<dbReference type="SMR" id="C0RJB4"/>
<dbReference type="MEROPS" id="S24.001"/>
<dbReference type="GeneID" id="97533604"/>
<dbReference type="KEGG" id="bmi:BMEA_A1188"/>
<dbReference type="HOGENOM" id="CLU_066192_45_2_5"/>
<dbReference type="Proteomes" id="UP000001748">
    <property type="component" value="Chromosome I"/>
</dbReference>
<dbReference type="GO" id="GO:0003677">
    <property type="term" value="F:DNA binding"/>
    <property type="evidence" value="ECO:0007669"/>
    <property type="project" value="UniProtKB-UniRule"/>
</dbReference>
<dbReference type="GO" id="GO:0004252">
    <property type="term" value="F:serine-type endopeptidase activity"/>
    <property type="evidence" value="ECO:0007669"/>
    <property type="project" value="UniProtKB-UniRule"/>
</dbReference>
<dbReference type="GO" id="GO:0006281">
    <property type="term" value="P:DNA repair"/>
    <property type="evidence" value="ECO:0007669"/>
    <property type="project" value="UniProtKB-UniRule"/>
</dbReference>
<dbReference type="GO" id="GO:0006260">
    <property type="term" value="P:DNA replication"/>
    <property type="evidence" value="ECO:0007669"/>
    <property type="project" value="UniProtKB-UniRule"/>
</dbReference>
<dbReference type="GO" id="GO:0045892">
    <property type="term" value="P:negative regulation of DNA-templated transcription"/>
    <property type="evidence" value="ECO:0007669"/>
    <property type="project" value="UniProtKB-UniRule"/>
</dbReference>
<dbReference type="GO" id="GO:0006508">
    <property type="term" value="P:proteolysis"/>
    <property type="evidence" value="ECO:0007669"/>
    <property type="project" value="InterPro"/>
</dbReference>
<dbReference type="GO" id="GO:0009432">
    <property type="term" value="P:SOS response"/>
    <property type="evidence" value="ECO:0007669"/>
    <property type="project" value="UniProtKB-UniRule"/>
</dbReference>
<dbReference type="CDD" id="cd06529">
    <property type="entry name" value="S24_LexA-like"/>
    <property type="match status" value="1"/>
</dbReference>
<dbReference type="FunFam" id="1.10.10.10:FF:000102">
    <property type="entry name" value="LexA repressor"/>
    <property type="match status" value="1"/>
</dbReference>
<dbReference type="FunFam" id="2.10.109.10:FF:000001">
    <property type="entry name" value="LexA repressor"/>
    <property type="match status" value="1"/>
</dbReference>
<dbReference type="Gene3D" id="2.10.109.10">
    <property type="entry name" value="Umud Fragment, subunit A"/>
    <property type="match status" value="1"/>
</dbReference>
<dbReference type="Gene3D" id="1.10.10.10">
    <property type="entry name" value="Winged helix-like DNA-binding domain superfamily/Winged helix DNA-binding domain"/>
    <property type="match status" value="1"/>
</dbReference>
<dbReference type="HAMAP" id="MF_00015">
    <property type="entry name" value="LexA"/>
    <property type="match status" value="1"/>
</dbReference>
<dbReference type="InterPro" id="IPR006200">
    <property type="entry name" value="LexA"/>
</dbReference>
<dbReference type="InterPro" id="IPR039418">
    <property type="entry name" value="LexA-like"/>
</dbReference>
<dbReference type="InterPro" id="IPR036286">
    <property type="entry name" value="LexA/Signal_pep-like_sf"/>
</dbReference>
<dbReference type="InterPro" id="IPR006199">
    <property type="entry name" value="LexA_DNA-bd_dom"/>
</dbReference>
<dbReference type="InterPro" id="IPR050077">
    <property type="entry name" value="LexA_repressor"/>
</dbReference>
<dbReference type="InterPro" id="IPR006197">
    <property type="entry name" value="Peptidase_S24_LexA"/>
</dbReference>
<dbReference type="InterPro" id="IPR015927">
    <property type="entry name" value="Peptidase_S24_S26A/B/C"/>
</dbReference>
<dbReference type="InterPro" id="IPR036388">
    <property type="entry name" value="WH-like_DNA-bd_sf"/>
</dbReference>
<dbReference type="InterPro" id="IPR036390">
    <property type="entry name" value="WH_DNA-bd_sf"/>
</dbReference>
<dbReference type="NCBIfam" id="TIGR00498">
    <property type="entry name" value="lexA"/>
    <property type="match status" value="1"/>
</dbReference>
<dbReference type="PANTHER" id="PTHR33516">
    <property type="entry name" value="LEXA REPRESSOR"/>
    <property type="match status" value="1"/>
</dbReference>
<dbReference type="PANTHER" id="PTHR33516:SF2">
    <property type="entry name" value="LEXA REPRESSOR-RELATED"/>
    <property type="match status" value="1"/>
</dbReference>
<dbReference type="Pfam" id="PF01726">
    <property type="entry name" value="LexA_DNA_bind"/>
    <property type="match status" value="1"/>
</dbReference>
<dbReference type="Pfam" id="PF00717">
    <property type="entry name" value="Peptidase_S24"/>
    <property type="match status" value="1"/>
</dbReference>
<dbReference type="PRINTS" id="PR00726">
    <property type="entry name" value="LEXASERPTASE"/>
</dbReference>
<dbReference type="SUPFAM" id="SSF51306">
    <property type="entry name" value="LexA/Signal peptidase"/>
    <property type="match status" value="1"/>
</dbReference>
<dbReference type="SUPFAM" id="SSF46785">
    <property type="entry name" value="Winged helix' DNA-binding domain"/>
    <property type="match status" value="1"/>
</dbReference>
<sequence>MLTRKQHELLLFIHERLKETGIPPSFDEMKEALDLASKSGIHRLITALEERGFIRRLPNRARALEVLRLPDSIAPGLSPQKKFAPSVIEGSLGKVASVQPVRPAPAPQNSEAPATVSVPVMGRIAAGVPISAIQNQTHMLSLPPEMIGAGEHYALEVKGDSMIDAGIFDGDTVIIKRGDTANPGEIVVALVDEEEATLKRFRREGASIALEAANPAYETRIFGPDRVHVQGKLVGLIRRY</sequence>
<reference key="1">
    <citation type="submission" date="2009-03" db="EMBL/GenBank/DDBJ databases">
        <title>Brucella melitensis ATCC 23457 whole genome shotgun sequencing project.</title>
        <authorList>
            <person name="Setubal J.C."/>
            <person name="Boyle S."/>
            <person name="Crasta O.R."/>
            <person name="Gillespie J.J."/>
            <person name="Kenyon R.W."/>
            <person name="Lu J."/>
            <person name="Mane S."/>
            <person name="Nagrani S."/>
            <person name="Shallom J.M."/>
            <person name="Shallom S."/>
            <person name="Shukla M."/>
            <person name="Snyder E.E."/>
            <person name="Sobral B.W."/>
            <person name="Wattam A.R."/>
            <person name="Will R."/>
            <person name="Williams K."/>
            <person name="Yoo H."/>
            <person name="Munk C."/>
            <person name="Tapia R."/>
            <person name="Han C."/>
            <person name="Detter J.C."/>
            <person name="Bruce D."/>
            <person name="Brettin T.S."/>
        </authorList>
    </citation>
    <scope>NUCLEOTIDE SEQUENCE [LARGE SCALE GENOMIC DNA]</scope>
    <source>
        <strain>ATCC 23457</strain>
    </source>
</reference>
<protein>
    <recommendedName>
        <fullName evidence="1">LexA repressor</fullName>
        <ecNumber evidence="1">3.4.21.88</ecNumber>
    </recommendedName>
</protein>